<keyword id="KW-0963">Cytoplasm</keyword>
<keyword id="KW-0648">Protein biosynthesis</keyword>
<sequence length="185" mass="20545">MINEIKKDAQERMEKSVEALKNNLLKVRTGRAHPSLLSGISVEYYGAKTPLNQVANVVAEDSRTLAITVFDKELAGLVEKAIMMSDLGLNPMSAGTVIRVPLPPLTEERRKDLVKIVRGEAENGRVAVRNIRRDANGDVKALLKEKEISEDDDRRAQDEIQKLTDAAVKSIDEVLAVKEKELMEV</sequence>
<gene>
    <name evidence="1" type="primary">frr</name>
    <name type="ordered locus">VFMJ11_2093</name>
</gene>
<reference key="1">
    <citation type="submission" date="2008-08" db="EMBL/GenBank/DDBJ databases">
        <title>Complete sequence of Vibrio fischeri strain MJ11.</title>
        <authorList>
            <person name="Mandel M.J."/>
            <person name="Stabb E.V."/>
            <person name="Ruby E.G."/>
            <person name="Ferriera S."/>
            <person name="Johnson J."/>
            <person name="Kravitz S."/>
            <person name="Beeson K."/>
            <person name="Sutton G."/>
            <person name="Rogers Y.-H."/>
            <person name="Friedman R."/>
            <person name="Frazier M."/>
            <person name="Venter J.C."/>
        </authorList>
    </citation>
    <scope>NUCLEOTIDE SEQUENCE [LARGE SCALE GENOMIC DNA]</scope>
    <source>
        <strain>MJ11</strain>
    </source>
</reference>
<dbReference type="EMBL" id="CP001139">
    <property type="protein sequence ID" value="ACH66421.1"/>
    <property type="molecule type" value="Genomic_DNA"/>
</dbReference>
<dbReference type="RefSeq" id="WP_005420553.1">
    <property type="nucleotide sequence ID" value="NC_011184.1"/>
</dbReference>
<dbReference type="SMR" id="B5F9X3"/>
<dbReference type="KEGG" id="vfm:VFMJ11_2093"/>
<dbReference type="HOGENOM" id="CLU_073981_2_1_6"/>
<dbReference type="Proteomes" id="UP000001857">
    <property type="component" value="Chromosome I"/>
</dbReference>
<dbReference type="GO" id="GO:0005829">
    <property type="term" value="C:cytosol"/>
    <property type="evidence" value="ECO:0007669"/>
    <property type="project" value="GOC"/>
</dbReference>
<dbReference type="GO" id="GO:0043023">
    <property type="term" value="F:ribosomal large subunit binding"/>
    <property type="evidence" value="ECO:0007669"/>
    <property type="project" value="TreeGrafter"/>
</dbReference>
<dbReference type="GO" id="GO:0002184">
    <property type="term" value="P:cytoplasmic translational termination"/>
    <property type="evidence" value="ECO:0007669"/>
    <property type="project" value="TreeGrafter"/>
</dbReference>
<dbReference type="CDD" id="cd00520">
    <property type="entry name" value="RRF"/>
    <property type="match status" value="1"/>
</dbReference>
<dbReference type="FunFam" id="1.10.132.20:FF:000001">
    <property type="entry name" value="Ribosome-recycling factor"/>
    <property type="match status" value="1"/>
</dbReference>
<dbReference type="FunFam" id="3.30.1360.40:FF:000001">
    <property type="entry name" value="Ribosome-recycling factor"/>
    <property type="match status" value="1"/>
</dbReference>
<dbReference type="Gene3D" id="3.30.1360.40">
    <property type="match status" value="1"/>
</dbReference>
<dbReference type="Gene3D" id="1.10.132.20">
    <property type="entry name" value="Ribosome-recycling factor"/>
    <property type="match status" value="1"/>
</dbReference>
<dbReference type="HAMAP" id="MF_00040">
    <property type="entry name" value="RRF"/>
    <property type="match status" value="1"/>
</dbReference>
<dbReference type="InterPro" id="IPR002661">
    <property type="entry name" value="Ribosome_recyc_fac"/>
</dbReference>
<dbReference type="InterPro" id="IPR023584">
    <property type="entry name" value="Ribosome_recyc_fac_dom"/>
</dbReference>
<dbReference type="InterPro" id="IPR036191">
    <property type="entry name" value="RRF_sf"/>
</dbReference>
<dbReference type="NCBIfam" id="TIGR00496">
    <property type="entry name" value="frr"/>
    <property type="match status" value="1"/>
</dbReference>
<dbReference type="PANTHER" id="PTHR20982:SF3">
    <property type="entry name" value="MITOCHONDRIAL RIBOSOME RECYCLING FACTOR PSEUDO 1"/>
    <property type="match status" value="1"/>
</dbReference>
<dbReference type="PANTHER" id="PTHR20982">
    <property type="entry name" value="RIBOSOME RECYCLING FACTOR"/>
    <property type="match status" value="1"/>
</dbReference>
<dbReference type="Pfam" id="PF01765">
    <property type="entry name" value="RRF"/>
    <property type="match status" value="1"/>
</dbReference>
<dbReference type="SUPFAM" id="SSF55194">
    <property type="entry name" value="Ribosome recycling factor, RRF"/>
    <property type="match status" value="1"/>
</dbReference>
<accession>B5F9X3</accession>
<evidence type="ECO:0000255" key="1">
    <source>
        <dbReference type="HAMAP-Rule" id="MF_00040"/>
    </source>
</evidence>
<feature type="chain" id="PRO_1000090801" description="Ribosome-recycling factor">
    <location>
        <begin position="1"/>
        <end position="185"/>
    </location>
</feature>
<name>RRF_ALIFM</name>
<proteinExistence type="inferred from homology"/>
<organism>
    <name type="scientific">Aliivibrio fischeri (strain MJ11)</name>
    <name type="common">Vibrio fischeri</name>
    <dbReference type="NCBI Taxonomy" id="388396"/>
    <lineage>
        <taxon>Bacteria</taxon>
        <taxon>Pseudomonadati</taxon>
        <taxon>Pseudomonadota</taxon>
        <taxon>Gammaproteobacteria</taxon>
        <taxon>Vibrionales</taxon>
        <taxon>Vibrionaceae</taxon>
        <taxon>Aliivibrio</taxon>
    </lineage>
</organism>
<protein>
    <recommendedName>
        <fullName evidence="1">Ribosome-recycling factor</fullName>
        <shortName evidence="1">RRF</shortName>
    </recommendedName>
    <alternativeName>
        <fullName evidence="1">Ribosome-releasing factor</fullName>
    </alternativeName>
</protein>
<comment type="function">
    <text evidence="1">Responsible for the release of ribosomes from messenger RNA at the termination of protein biosynthesis. May increase the efficiency of translation by recycling ribosomes from one round of translation to another.</text>
</comment>
<comment type="subcellular location">
    <subcellularLocation>
        <location evidence="1">Cytoplasm</location>
    </subcellularLocation>
</comment>
<comment type="similarity">
    <text evidence="1">Belongs to the RRF family.</text>
</comment>